<evidence type="ECO:0000255" key="1">
    <source>
        <dbReference type="HAMAP-Rule" id="MF_00758"/>
    </source>
</evidence>
<evidence type="ECO:0000305" key="2"/>
<dbReference type="EMBL" id="CP000086">
    <property type="protein sequence ID" value="ABC37533.1"/>
    <property type="status" value="ALT_INIT"/>
    <property type="molecule type" value="Genomic_DNA"/>
</dbReference>
<dbReference type="RefSeq" id="WP_009889573.1">
    <property type="nucleotide sequence ID" value="NZ_CP008785.1"/>
</dbReference>
<dbReference type="SMR" id="Q2SYJ1"/>
<dbReference type="KEGG" id="bte:BTH_I1462"/>
<dbReference type="HOGENOM" id="CLU_057596_1_0_4"/>
<dbReference type="Proteomes" id="UP000001930">
    <property type="component" value="Chromosome I"/>
</dbReference>
<dbReference type="GO" id="GO:0005829">
    <property type="term" value="C:cytosol"/>
    <property type="evidence" value="ECO:0007669"/>
    <property type="project" value="TreeGrafter"/>
</dbReference>
<dbReference type="Gene3D" id="3.40.1740.10">
    <property type="entry name" value="VC0467-like"/>
    <property type="match status" value="1"/>
</dbReference>
<dbReference type="HAMAP" id="MF_00758">
    <property type="entry name" value="UPF0301"/>
    <property type="match status" value="1"/>
</dbReference>
<dbReference type="InterPro" id="IPR003774">
    <property type="entry name" value="AlgH-like"/>
</dbReference>
<dbReference type="NCBIfam" id="NF001266">
    <property type="entry name" value="PRK00228.1-1"/>
    <property type="match status" value="1"/>
</dbReference>
<dbReference type="NCBIfam" id="NF001267">
    <property type="entry name" value="PRK00228.1-2"/>
    <property type="match status" value="1"/>
</dbReference>
<dbReference type="PANTHER" id="PTHR30327">
    <property type="entry name" value="UNCHARACTERIZED PROTEIN YQGE"/>
    <property type="match status" value="1"/>
</dbReference>
<dbReference type="PANTHER" id="PTHR30327:SF1">
    <property type="entry name" value="UPF0301 PROTEIN YQGE"/>
    <property type="match status" value="1"/>
</dbReference>
<dbReference type="Pfam" id="PF02622">
    <property type="entry name" value="DUF179"/>
    <property type="match status" value="1"/>
</dbReference>
<dbReference type="SUPFAM" id="SSF143456">
    <property type="entry name" value="VC0467-like"/>
    <property type="match status" value="1"/>
</dbReference>
<accession>Q2SYJ1</accession>
<reference key="1">
    <citation type="journal article" date="2005" name="BMC Genomics">
        <title>Bacterial genome adaptation to niches: divergence of the potential virulence genes in three Burkholderia species of different survival strategies.</title>
        <authorList>
            <person name="Kim H.S."/>
            <person name="Schell M.A."/>
            <person name="Yu Y."/>
            <person name="Ulrich R.L."/>
            <person name="Sarria S.H."/>
            <person name="Nierman W.C."/>
            <person name="DeShazer D."/>
        </authorList>
    </citation>
    <scope>NUCLEOTIDE SEQUENCE [LARGE SCALE GENOMIC DNA]</scope>
    <source>
        <strain>ATCC 700388 / DSM 13276 / CCUG 48851 / CIP 106301 / E264</strain>
    </source>
</reference>
<feature type="chain" id="PRO_0000258811" description="UPF0301 protein BTH_I1462">
    <location>
        <begin position="1"/>
        <end position="192"/>
    </location>
</feature>
<proteinExistence type="inferred from homology"/>
<gene>
    <name type="ordered locus">BTH_I1462</name>
</gene>
<comment type="similarity">
    <text evidence="1">Belongs to the UPF0301 (AlgH) family.</text>
</comment>
<comment type="sequence caution" evidence="2">
    <conflict type="erroneous initiation">
        <sequence resource="EMBL-CDS" id="ABC37533"/>
    </conflict>
</comment>
<protein>
    <recommendedName>
        <fullName evidence="1">UPF0301 protein BTH_I1462</fullName>
    </recommendedName>
</protein>
<organism>
    <name type="scientific">Burkholderia thailandensis (strain ATCC 700388 / DSM 13276 / CCUG 48851 / CIP 106301 / E264)</name>
    <dbReference type="NCBI Taxonomy" id="271848"/>
    <lineage>
        <taxon>Bacteria</taxon>
        <taxon>Pseudomonadati</taxon>
        <taxon>Pseudomonadota</taxon>
        <taxon>Betaproteobacteria</taxon>
        <taxon>Burkholderiales</taxon>
        <taxon>Burkholderiaceae</taxon>
        <taxon>Burkholderia</taxon>
        <taxon>pseudomallei group</taxon>
    </lineage>
</organism>
<name>Y1462_BURTA</name>
<sequence length="192" mass="20662">MSKSSDRINLTNQFLIAMPNMADPTFSGTVVYLCDHSERGALGLVINRPTDIDLESLFNRIDLKLEIEPLLHIPVYFGGPVQTERGFVLHEPVEGSSYNSSMTVEGGLEMTTSKDVLEAVATGTGPKRFLLTLGHAGWGAGQLEEEISKNGWLTVAADPRIVFDTPAEERFEAALGLLGVSSSMLSGEAGHA</sequence>